<reference key="1">
    <citation type="journal article" date="1992" name="Virus Genes">
        <title>Nucleotide sequence of the genome segment encoding nonstructural protein NS1 of bluetongue virus serotype 20 from Australia.</title>
        <authorList>
            <person name="Cowley J.A."/>
        </authorList>
    </citation>
    <scope>NUCLEOTIDE SEQUENCE</scope>
</reference>
<evidence type="ECO:0000305" key="1"/>
<comment type="similarity">
    <text evidence="1">Belongs to the orbivirus non-structural protein NS1 family.</text>
</comment>
<sequence length="552" mass="64511">MERFLRKYNISGDYANATRTFLAISPQWTCSHLKRNCLSNGMCAKQNFERAMIAATDAEEPIKAFRLIELAKEAMYDRETVWLQCFKSFSQPYEEDIEGKIKRCGAQLLEDYRKSGMMEEAIKQSALINSERVRLDDSLSAIPYIYVPIKEGQIVNPTFISRYRQIAYYFYNPDAADDWIDPNLFGVRGQHHQIKREVERQINTCPYTGYKGGIFQVMYLPIQLINFLRMDDFAKHFNRYASMAIQQYLRVGYLEEIRYVQQLFGKVPSGEFPLHQMMLMRRDFPTRDRNIVEARVKRSGDENWQSWLLPMVLVREGLDQQEKWEWLLEYMDRKHICQLCYLKHSKQIQTCSVIDVRASELIGCSPFRTVKIEEHVGNEPVFKTKLIRDQQIGRIGDHYYTTSCYTGAEALVTTAIHIHRWIRGCGIWNDEGWQEGVFMLGRVLLRWELTKAQRSALLRLFCFVCYGYAPRADGTVPDWNNLGSFLDIILKGPELSEDEDERAYATMFEMVRCIITLCYAEKVHFAGFTAPACESGEVINLAARMSQMWMEY</sequence>
<organismHost>
    <name type="scientific">Antilocapra americana</name>
    <name type="common">Pronghorn</name>
    <dbReference type="NCBI Taxonomy" id="9891"/>
</organismHost>
<organismHost>
    <name type="scientific">Bos taurus</name>
    <name type="common">Bovine</name>
    <dbReference type="NCBI Taxonomy" id="9913"/>
</organismHost>
<organismHost>
    <name type="scientific">Capra hircus</name>
    <name type="common">Goat</name>
    <dbReference type="NCBI Taxonomy" id="9925"/>
</organismHost>
<organismHost>
    <name type="scientific">Culicoides variipennis</name>
    <name type="common">Biting midge</name>
    <dbReference type="NCBI Taxonomy" id="46212"/>
</organismHost>
<organismHost>
    <name type="scientific">Ovis aries</name>
    <name type="common">Sheep</name>
    <dbReference type="NCBI Taxonomy" id="9940"/>
</organismHost>
<accession>P32931</accession>
<feature type="chain" id="PRO_0000222669" description="Non-structural protein NS1">
    <location>
        <begin position="1"/>
        <end position="552"/>
    </location>
</feature>
<proteinExistence type="inferred from homology"/>
<gene>
    <name type="primary">Segment-5</name>
</gene>
<organism>
    <name type="scientific">Bluetongue virus 20 (isolate Australia)</name>
    <name type="common">BTV 20</name>
    <dbReference type="NCBI Taxonomy" id="31562"/>
    <lineage>
        <taxon>Viruses</taxon>
        <taxon>Riboviria</taxon>
        <taxon>Orthornavirae</taxon>
        <taxon>Duplornaviricota</taxon>
        <taxon>Resentoviricetes</taxon>
        <taxon>Reovirales</taxon>
        <taxon>Sedoreoviridae</taxon>
        <taxon>Orbivirus</taxon>
        <taxon>Bluetongue virus</taxon>
    </lineage>
</organism>
<dbReference type="EMBL" id="X56735">
    <property type="protein sequence ID" value="CAA40059.1"/>
    <property type="molecule type" value="Unassigned_RNA"/>
</dbReference>
<dbReference type="PIR" id="A48553">
    <property type="entry name" value="A48553"/>
</dbReference>
<dbReference type="SMR" id="P32931"/>
<dbReference type="InterPro" id="IPR002630">
    <property type="entry name" value="Orbi_NS1"/>
</dbReference>
<dbReference type="Pfam" id="PF01718">
    <property type="entry name" value="Orbi_NS1"/>
    <property type="match status" value="1"/>
</dbReference>
<name>VNS1_BTV20</name>
<protein>
    <recommendedName>
        <fullName>Non-structural protein NS1</fullName>
    </recommendedName>
</protein>